<evidence type="ECO:0000250" key="1"/>
<evidence type="ECO:0000255" key="2"/>
<evidence type="ECO:0000305" key="3"/>
<proteinExistence type="inferred from homology"/>
<comment type="subcellular location">
    <subcellularLocation>
        <location evidence="1">Cell inner membrane</location>
        <topology evidence="1">Multi-pass membrane protein</topology>
    </subcellularLocation>
</comment>
<comment type="similarity">
    <text evidence="3">Belongs to the CbrB family.</text>
</comment>
<organism>
    <name type="scientific">Escherichia coli (strain UTI89 / UPEC)</name>
    <dbReference type="NCBI Taxonomy" id="364106"/>
    <lineage>
        <taxon>Bacteria</taxon>
        <taxon>Pseudomonadati</taxon>
        <taxon>Pseudomonadota</taxon>
        <taxon>Gammaproteobacteria</taxon>
        <taxon>Enterobacterales</taxon>
        <taxon>Enterobacteriaceae</taxon>
        <taxon>Escherichia</taxon>
    </lineage>
</organism>
<feature type="chain" id="PRO_0000320698" description="Inner membrane protein CbrB">
    <location>
        <begin position="1"/>
        <end position="157"/>
    </location>
</feature>
<feature type="topological domain" description="Cytoplasmic" evidence="2">
    <location>
        <begin position="1"/>
        <end position="11"/>
    </location>
</feature>
<feature type="transmembrane region" description="Helical" evidence="2">
    <location>
        <begin position="12"/>
        <end position="32"/>
    </location>
</feature>
<feature type="topological domain" description="Periplasmic" evidence="2">
    <location>
        <begin position="33"/>
        <end position="36"/>
    </location>
</feature>
<feature type="transmembrane region" description="Helical" evidence="2">
    <location>
        <begin position="37"/>
        <end position="57"/>
    </location>
</feature>
<feature type="topological domain" description="Cytoplasmic" evidence="2">
    <location>
        <begin position="58"/>
        <end position="83"/>
    </location>
</feature>
<feature type="transmembrane region" description="Helical" evidence="2">
    <location>
        <begin position="84"/>
        <end position="104"/>
    </location>
</feature>
<feature type="topological domain" description="Periplasmic" evidence="2">
    <location>
        <begin position="105"/>
        <end position="125"/>
    </location>
</feature>
<feature type="transmembrane region" description="Helical" evidence="2">
    <location>
        <begin position="126"/>
        <end position="146"/>
    </location>
</feature>
<feature type="topological domain" description="Cytoplasmic" evidence="2">
    <location>
        <begin position="147"/>
        <end position="157"/>
    </location>
</feature>
<dbReference type="EMBL" id="CP000243">
    <property type="protein sequence ID" value="ABE09695.1"/>
    <property type="molecule type" value="Genomic_DNA"/>
</dbReference>
<dbReference type="RefSeq" id="WP_000116758.1">
    <property type="nucleotide sequence ID" value="NZ_CP064825.1"/>
</dbReference>
<dbReference type="KEGG" id="eci:UTI89_C4268"/>
<dbReference type="HOGENOM" id="CLU_139024_0_0_6"/>
<dbReference type="Proteomes" id="UP000001952">
    <property type="component" value="Chromosome"/>
</dbReference>
<dbReference type="GO" id="GO:0005886">
    <property type="term" value="C:plasma membrane"/>
    <property type="evidence" value="ECO:0007669"/>
    <property type="project" value="UniProtKB-SubCell"/>
</dbReference>
<dbReference type="NCBIfam" id="NF007334">
    <property type="entry name" value="PRK09823.1"/>
    <property type="match status" value="1"/>
</dbReference>
<keyword id="KW-0997">Cell inner membrane</keyword>
<keyword id="KW-1003">Cell membrane</keyword>
<keyword id="KW-0472">Membrane</keyword>
<keyword id="KW-0812">Transmembrane</keyword>
<keyword id="KW-1133">Transmembrane helix</keyword>
<sequence length="157" mass="16914">MSVSRRVIHHGLYFAVLGPLIGVLFLVLYIFFAKEPLILLVIIQVLPLFLLMSITTGAIPAMLTGVMVACLPEKIGSQKRYRCLVGGIGGVVITEIYCAVIVHIKDMASSALFENILSGENLVVRIIPALLAGVVMSRIITHLPGLDISCPETDSLS</sequence>
<name>CBRB_ECOUT</name>
<accession>Q1R4L9</accession>
<protein>
    <recommendedName>
        <fullName>Inner membrane protein CbrB</fullName>
    </recommendedName>
</protein>
<gene>
    <name type="primary">cbrB</name>
    <name type="ordered locus">UTI89_C4268</name>
</gene>
<reference key="1">
    <citation type="journal article" date="2006" name="Proc. Natl. Acad. Sci. U.S.A.">
        <title>Identification of genes subject to positive selection in uropathogenic strains of Escherichia coli: a comparative genomics approach.</title>
        <authorList>
            <person name="Chen S.L."/>
            <person name="Hung C.-S."/>
            <person name="Xu J."/>
            <person name="Reigstad C.S."/>
            <person name="Magrini V."/>
            <person name="Sabo A."/>
            <person name="Blasiar D."/>
            <person name="Bieri T."/>
            <person name="Meyer R.R."/>
            <person name="Ozersky P."/>
            <person name="Armstrong J.R."/>
            <person name="Fulton R.S."/>
            <person name="Latreille J.P."/>
            <person name="Spieth J."/>
            <person name="Hooton T.M."/>
            <person name="Mardis E.R."/>
            <person name="Hultgren S.J."/>
            <person name="Gordon J.I."/>
        </authorList>
    </citation>
    <scope>NUCLEOTIDE SEQUENCE [LARGE SCALE GENOMIC DNA]</scope>
    <source>
        <strain>UTI89 / UPEC</strain>
    </source>
</reference>